<reference key="1">
    <citation type="journal article" date="2000" name="Nature">
        <title>Sequence and analysis of chromosome 3 of the plant Arabidopsis thaliana.</title>
        <authorList>
            <person name="Salanoubat M."/>
            <person name="Lemcke K."/>
            <person name="Rieger M."/>
            <person name="Ansorge W."/>
            <person name="Unseld M."/>
            <person name="Fartmann B."/>
            <person name="Valle G."/>
            <person name="Bloecker H."/>
            <person name="Perez-Alonso M."/>
            <person name="Obermaier B."/>
            <person name="Delseny M."/>
            <person name="Boutry M."/>
            <person name="Grivell L.A."/>
            <person name="Mache R."/>
            <person name="Puigdomenech P."/>
            <person name="De Simone V."/>
            <person name="Choisne N."/>
            <person name="Artiguenave F."/>
            <person name="Robert C."/>
            <person name="Brottier P."/>
            <person name="Wincker P."/>
            <person name="Cattolico L."/>
            <person name="Weissenbach J."/>
            <person name="Saurin W."/>
            <person name="Quetier F."/>
            <person name="Schaefer M."/>
            <person name="Mueller-Auer S."/>
            <person name="Gabel C."/>
            <person name="Fuchs M."/>
            <person name="Benes V."/>
            <person name="Wurmbach E."/>
            <person name="Drzonek H."/>
            <person name="Erfle H."/>
            <person name="Jordan N."/>
            <person name="Bangert S."/>
            <person name="Wiedelmann R."/>
            <person name="Kranz H."/>
            <person name="Voss H."/>
            <person name="Holland R."/>
            <person name="Brandt P."/>
            <person name="Nyakatura G."/>
            <person name="Vezzi A."/>
            <person name="D'Angelo M."/>
            <person name="Pallavicini A."/>
            <person name="Toppo S."/>
            <person name="Simionati B."/>
            <person name="Conrad A."/>
            <person name="Hornischer K."/>
            <person name="Kauer G."/>
            <person name="Loehnert T.-H."/>
            <person name="Nordsiek G."/>
            <person name="Reichelt J."/>
            <person name="Scharfe M."/>
            <person name="Schoen O."/>
            <person name="Bargues M."/>
            <person name="Terol J."/>
            <person name="Climent J."/>
            <person name="Navarro P."/>
            <person name="Collado C."/>
            <person name="Perez-Perez A."/>
            <person name="Ottenwaelder B."/>
            <person name="Duchemin D."/>
            <person name="Cooke R."/>
            <person name="Laudie M."/>
            <person name="Berger-Llauro C."/>
            <person name="Purnelle B."/>
            <person name="Masuy D."/>
            <person name="de Haan M."/>
            <person name="Maarse A.C."/>
            <person name="Alcaraz J.-P."/>
            <person name="Cottet A."/>
            <person name="Casacuberta E."/>
            <person name="Monfort A."/>
            <person name="Argiriou A."/>
            <person name="Flores M."/>
            <person name="Liguori R."/>
            <person name="Vitale D."/>
            <person name="Mannhaupt G."/>
            <person name="Haase D."/>
            <person name="Schoof H."/>
            <person name="Rudd S."/>
            <person name="Zaccaria P."/>
            <person name="Mewes H.-W."/>
            <person name="Mayer K.F.X."/>
            <person name="Kaul S."/>
            <person name="Town C.D."/>
            <person name="Koo H.L."/>
            <person name="Tallon L.J."/>
            <person name="Jenkins J."/>
            <person name="Rooney T."/>
            <person name="Rizzo M."/>
            <person name="Walts A."/>
            <person name="Utterback T."/>
            <person name="Fujii C.Y."/>
            <person name="Shea T.P."/>
            <person name="Creasy T.H."/>
            <person name="Haas B."/>
            <person name="Maiti R."/>
            <person name="Wu D."/>
            <person name="Peterson J."/>
            <person name="Van Aken S."/>
            <person name="Pai G."/>
            <person name="Militscher J."/>
            <person name="Sellers P."/>
            <person name="Gill J.E."/>
            <person name="Feldblyum T.V."/>
            <person name="Preuss D."/>
            <person name="Lin X."/>
            <person name="Nierman W.C."/>
            <person name="Salzberg S.L."/>
            <person name="White O."/>
            <person name="Venter J.C."/>
            <person name="Fraser C.M."/>
            <person name="Kaneko T."/>
            <person name="Nakamura Y."/>
            <person name="Sato S."/>
            <person name="Kato T."/>
            <person name="Asamizu E."/>
            <person name="Sasamoto S."/>
            <person name="Kimura T."/>
            <person name="Idesawa K."/>
            <person name="Kawashima K."/>
            <person name="Kishida Y."/>
            <person name="Kiyokawa C."/>
            <person name="Kohara M."/>
            <person name="Matsumoto M."/>
            <person name="Matsuno A."/>
            <person name="Muraki A."/>
            <person name="Nakayama S."/>
            <person name="Nakazaki N."/>
            <person name="Shinpo S."/>
            <person name="Takeuchi C."/>
            <person name="Wada T."/>
            <person name="Watanabe A."/>
            <person name="Yamada M."/>
            <person name="Yasuda M."/>
            <person name="Tabata S."/>
        </authorList>
    </citation>
    <scope>NUCLEOTIDE SEQUENCE [LARGE SCALE GENOMIC DNA]</scope>
    <source>
        <strain>cv. Columbia</strain>
    </source>
</reference>
<reference key="2">
    <citation type="journal article" date="2017" name="Plant J.">
        <title>Araport11: a complete reannotation of the Arabidopsis thaliana reference genome.</title>
        <authorList>
            <person name="Cheng C.Y."/>
            <person name="Krishnakumar V."/>
            <person name="Chan A.P."/>
            <person name="Thibaud-Nissen F."/>
            <person name="Schobel S."/>
            <person name="Town C.D."/>
        </authorList>
    </citation>
    <scope>GENOME REANNOTATION</scope>
    <source>
        <strain>cv. Columbia</strain>
    </source>
</reference>
<reference key="3">
    <citation type="submission" date="2006-07" db="EMBL/GenBank/DDBJ databases">
        <title>Large-scale analysis of RIKEN Arabidopsis full-length (RAFL) cDNAs.</title>
        <authorList>
            <person name="Totoki Y."/>
            <person name="Seki M."/>
            <person name="Ishida J."/>
            <person name="Nakajima M."/>
            <person name="Enju A."/>
            <person name="Kamiya A."/>
            <person name="Narusaka M."/>
            <person name="Shin-i T."/>
            <person name="Nakagawa M."/>
            <person name="Sakamoto N."/>
            <person name="Oishi K."/>
            <person name="Kohara Y."/>
            <person name="Kobayashi M."/>
            <person name="Toyoda A."/>
            <person name="Sakaki Y."/>
            <person name="Sakurai T."/>
            <person name="Iida K."/>
            <person name="Akiyama K."/>
            <person name="Satou M."/>
            <person name="Toyoda T."/>
            <person name="Konagaya A."/>
            <person name="Carninci P."/>
            <person name="Kawai J."/>
            <person name="Hayashizaki Y."/>
            <person name="Shinozaki K."/>
        </authorList>
    </citation>
    <scope>NUCLEOTIDE SEQUENCE [LARGE SCALE MRNA]</scope>
    <source>
        <strain>cv. Columbia</strain>
    </source>
</reference>
<reference key="4">
    <citation type="journal article" date="2010" name="Metallomics">
        <title>Metallochaperone-like genes in Arabidopsis thaliana.</title>
        <authorList>
            <person name="Tehseen M."/>
            <person name="Cairns N."/>
            <person name="Sherson S."/>
            <person name="Cobbett C.S."/>
        </authorList>
    </citation>
    <scope>GENE FAMILY</scope>
    <scope>NOMENCLATURE</scope>
</reference>
<reference key="5">
    <citation type="journal article" date="2013" name="FEBS J.">
        <title>Heavy metal-associated isoprenylated plant protein (HIPP): characterization of a family of proteins exclusive to plants.</title>
        <authorList>
            <person name="de Abreu-Neto J.B."/>
            <person name="Turchetto-Zolet A.C."/>
            <person name="de Oliveira L.F."/>
            <person name="Zanettini M.H."/>
            <person name="Margis-Pinheiro M."/>
        </authorList>
    </citation>
    <scope>GENE FAMILY</scope>
    <scope>NOMENCLATURE</scope>
</reference>
<comment type="function">
    <text evidence="1">Heavy-metal-binding protein.</text>
</comment>
<comment type="alternative products">
    <event type="alternative splicing"/>
    <isoform>
        <id>Q0WV37-1</id>
        <name>1</name>
        <sequence type="displayed"/>
    </isoform>
    <text evidence="7">A number of isoforms are produced. According to EST sequences.</text>
</comment>
<comment type="similarity">
    <text evidence="7">Belongs to the HIPP family.</text>
</comment>
<comment type="sequence caution" evidence="7">
    <conflict type="erroneous gene model prediction">
        <sequence resource="EMBL-CDS" id="AAF27028"/>
    </conflict>
</comment>
<protein>
    <recommendedName>
        <fullName evidence="5 6">Heavy metal-associated isoprenylated plant protein 34</fullName>
        <shortName evidence="5 6">AtHIP34</shortName>
    </recommendedName>
</protein>
<accession>Q0WV37</accession>
<accession>Q9MA97</accession>
<dbReference type="EMBL" id="AC009177">
    <property type="protein sequence ID" value="AAF27028.1"/>
    <property type="status" value="ALT_SEQ"/>
    <property type="molecule type" value="Genomic_DNA"/>
</dbReference>
<dbReference type="EMBL" id="CP002686">
    <property type="protein sequence ID" value="AEE74206.1"/>
    <property type="molecule type" value="Genomic_DNA"/>
</dbReference>
<dbReference type="EMBL" id="AK226941">
    <property type="protein sequence ID" value="BAE99011.1"/>
    <property type="molecule type" value="mRNA"/>
</dbReference>
<dbReference type="RefSeq" id="NP_187173.2">
    <molecule id="Q0WV37-1"/>
    <property type="nucleotide sequence ID" value="NM_111395.4"/>
</dbReference>
<dbReference type="SMR" id="Q0WV37"/>
<dbReference type="FunCoup" id="Q0WV37">
    <property type="interactions" value="23"/>
</dbReference>
<dbReference type="PaxDb" id="3702-AT3G05220.1"/>
<dbReference type="ProteomicsDB" id="230240">
    <molecule id="Q0WV37-1"/>
</dbReference>
<dbReference type="EnsemblPlants" id="AT3G05220.1">
    <molecule id="Q0WV37-1"/>
    <property type="protein sequence ID" value="AT3G05220.1"/>
    <property type="gene ID" value="AT3G05220"/>
</dbReference>
<dbReference type="GeneID" id="819686"/>
<dbReference type="Gramene" id="AT3G05220.1">
    <molecule id="Q0WV37-1"/>
    <property type="protein sequence ID" value="AT3G05220.1"/>
    <property type="gene ID" value="AT3G05220"/>
</dbReference>
<dbReference type="KEGG" id="ath:AT3G05220"/>
<dbReference type="Araport" id="AT3G05220"/>
<dbReference type="TAIR" id="AT3G05220"/>
<dbReference type="eggNOG" id="KOG1603">
    <property type="taxonomic scope" value="Eukaryota"/>
</dbReference>
<dbReference type="HOGENOM" id="CLU_017291_1_0_1"/>
<dbReference type="InParanoid" id="Q0WV37"/>
<dbReference type="OMA" id="QFANLNM"/>
<dbReference type="PRO" id="PR:Q0WV37"/>
<dbReference type="Proteomes" id="UP000006548">
    <property type="component" value="Chromosome 3"/>
</dbReference>
<dbReference type="ExpressionAtlas" id="Q0WV37">
    <property type="expression patterns" value="baseline and differential"/>
</dbReference>
<dbReference type="GO" id="GO:0009506">
    <property type="term" value="C:plasmodesma"/>
    <property type="evidence" value="ECO:0007005"/>
    <property type="project" value="TAIR"/>
</dbReference>
<dbReference type="GO" id="GO:0046872">
    <property type="term" value="F:metal ion binding"/>
    <property type="evidence" value="ECO:0007669"/>
    <property type="project" value="UniProtKB-KW"/>
</dbReference>
<dbReference type="CDD" id="cd00371">
    <property type="entry name" value="HMA"/>
    <property type="match status" value="1"/>
</dbReference>
<dbReference type="FunFam" id="3.30.70.100:FF:000008">
    <property type="entry name" value="Copper transport protein ATOX1"/>
    <property type="match status" value="1"/>
</dbReference>
<dbReference type="Gene3D" id="3.30.70.100">
    <property type="match status" value="1"/>
</dbReference>
<dbReference type="InterPro" id="IPR006121">
    <property type="entry name" value="HMA_dom"/>
</dbReference>
<dbReference type="InterPro" id="IPR036163">
    <property type="entry name" value="HMA_dom_sf"/>
</dbReference>
<dbReference type="PANTHER" id="PTHR22814">
    <property type="entry name" value="COPPER TRANSPORT PROTEIN ATOX1-RELATED"/>
    <property type="match status" value="1"/>
</dbReference>
<dbReference type="PANTHER" id="PTHR22814:SF336">
    <property type="entry name" value="HEAVY METAL-ASSOCIATED ISOPRENYLATED PLANT PROTEIN 23"/>
    <property type="match status" value="1"/>
</dbReference>
<dbReference type="Pfam" id="PF00403">
    <property type="entry name" value="HMA"/>
    <property type="match status" value="1"/>
</dbReference>
<dbReference type="SUPFAM" id="SSF55008">
    <property type="entry name" value="HMA, heavy metal-associated domain"/>
    <property type="match status" value="1"/>
</dbReference>
<dbReference type="PROSITE" id="PS50846">
    <property type="entry name" value="HMA_2"/>
    <property type="match status" value="1"/>
</dbReference>
<organism evidence="10">
    <name type="scientific">Arabidopsis thaliana</name>
    <name type="common">Mouse-ear cress</name>
    <dbReference type="NCBI Taxonomy" id="3702"/>
    <lineage>
        <taxon>Eukaryota</taxon>
        <taxon>Viridiplantae</taxon>
        <taxon>Streptophyta</taxon>
        <taxon>Embryophyta</taxon>
        <taxon>Tracheophyta</taxon>
        <taxon>Spermatophyta</taxon>
        <taxon>Magnoliopsida</taxon>
        <taxon>eudicotyledons</taxon>
        <taxon>Gunneridae</taxon>
        <taxon>Pentapetalae</taxon>
        <taxon>rosids</taxon>
        <taxon>malvids</taxon>
        <taxon>Brassicales</taxon>
        <taxon>Brassicaceae</taxon>
        <taxon>Camelineae</taxon>
        <taxon>Arabidopsis</taxon>
    </lineage>
</organism>
<gene>
    <name evidence="5 6" type="primary">HIPP34</name>
    <name evidence="8" type="ordered locus">At3g05220</name>
    <name evidence="9" type="ORF">T12H1.19</name>
</gene>
<name>HIP34_ARATH</name>
<sequence length="577" mass="58882">MNKQDVMKLQTCVLKVNVHCEGCKHKVKKQLQKIEGVYSVKADVEQGRVTVTGNIDPALLVKKLSKSGKHAEILGGGGGGGGGGGKGFPNLNGQFANLNMGGNNKPKGGKESNQVKGKAGGGGGGGQNHGHGQPMQLNPQQIQQMMMMKAAHGGGGGGQMKMPPMAAKDQKKSVKFADDEDDEFSEDDYDDEDFSEDDYDDDEFDDDEDDDDEMGHGHGHGGGGGNHMPPNKMMMPNKMMPQMGGHHGNGGGPKGPNEIMMMMNGFKGGGGGGKKGGGGGFEIPVQMKGMGEGKNGKDGKKGKGGEKGKKEGKENKGGGKTGKTDAKSGGGGLLGFFKKGKSGNGDEKKSAGKKDGHGGNKVKSHGGGGGVQHYDSGPKKGGGGTKGGGHGGLDIDELMKHSKGGGGGGNKGNHNHSAKGIGGGPMGPGGPMGPGGPMGQGGPMGMMGPGGPMSMMGPGGPMGPMGGQGGSYPAVQGLPMSGGGGYYPGPPQASQQMNQQQYMQMMMNQQQQQQQQQQAVAHGGYGGGHGGDMYHPMMYARPYPAVNYAHPPPMPPPHSDSYTHMFSDENPGSCSIM</sequence>
<keyword id="KW-0025">Alternative splicing</keyword>
<keyword id="KW-0449">Lipoprotein</keyword>
<keyword id="KW-0479">Metal-binding</keyword>
<keyword id="KW-0488">Methylation</keyword>
<keyword id="KW-0636">Prenylation</keyword>
<keyword id="KW-1185">Reference proteome</keyword>
<proteinExistence type="evidence at transcript level"/>
<feature type="chain" id="PRO_0000437845" description="Heavy metal-associated isoprenylated plant protein 34">
    <location>
        <begin position="1"/>
        <end position="574"/>
    </location>
</feature>
<feature type="propeptide" id="PRO_0000437846" description="Removed in mature form" evidence="7">
    <location>
        <begin position="575"/>
        <end position="577"/>
    </location>
</feature>
<feature type="domain" description="HMA" evidence="3">
    <location>
        <begin position="9"/>
        <end position="72"/>
    </location>
</feature>
<feature type="region of interest" description="Disordered" evidence="4">
    <location>
        <begin position="77"/>
        <end position="136"/>
    </location>
</feature>
<feature type="region of interest" description="Disordered" evidence="4">
    <location>
        <begin position="150"/>
        <end position="451"/>
    </location>
</feature>
<feature type="compositionally biased region" description="Gly residues" evidence="4">
    <location>
        <begin position="77"/>
        <end position="87"/>
    </location>
</feature>
<feature type="compositionally biased region" description="Low complexity" evidence="4">
    <location>
        <begin position="97"/>
        <end position="106"/>
    </location>
</feature>
<feature type="compositionally biased region" description="Gly residues" evidence="4">
    <location>
        <begin position="118"/>
        <end position="129"/>
    </location>
</feature>
<feature type="compositionally biased region" description="Basic and acidic residues" evidence="4">
    <location>
        <begin position="168"/>
        <end position="177"/>
    </location>
</feature>
<feature type="compositionally biased region" description="Acidic residues" evidence="4">
    <location>
        <begin position="178"/>
        <end position="213"/>
    </location>
</feature>
<feature type="compositionally biased region" description="Low complexity" evidence="4">
    <location>
        <begin position="227"/>
        <end position="244"/>
    </location>
</feature>
<feature type="compositionally biased region" description="Gly residues" evidence="4">
    <location>
        <begin position="245"/>
        <end position="254"/>
    </location>
</feature>
<feature type="compositionally biased region" description="Gly residues" evidence="4">
    <location>
        <begin position="266"/>
        <end position="281"/>
    </location>
</feature>
<feature type="compositionally biased region" description="Basic and acidic residues" evidence="4">
    <location>
        <begin position="294"/>
        <end position="326"/>
    </location>
</feature>
<feature type="compositionally biased region" description="Basic and acidic residues" evidence="4">
    <location>
        <begin position="344"/>
        <end position="358"/>
    </location>
</feature>
<feature type="compositionally biased region" description="Gly residues" evidence="4">
    <location>
        <begin position="379"/>
        <end position="392"/>
    </location>
</feature>
<feature type="compositionally biased region" description="Gly residues" evidence="4">
    <location>
        <begin position="420"/>
        <end position="451"/>
    </location>
</feature>
<feature type="binding site" evidence="3">
    <location>
        <position position="20"/>
    </location>
    <ligand>
        <name>a metal cation</name>
        <dbReference type="ChEBI" id="CHEBI:25213"/>
    </ligand>
</feature>
<feature type="binding site" evidence="3">
    <location>
        <position position="23"/>
    </location>
    <ligand>
        <name>a metal cation</name>
        <dbReference type="ChEBI" id="CHEBI:25213"/>
    </ligand>
</feature>
<feature type="modified residue" description="Cysteine methyl ester" evidence="2">
    <location>
        <position position="574"/>
    </location>
</feature>
<feature type="lipid moiety-binding region" description="S-farnesyl cysteine" evidence="2">
    <location>
        <position position="574"/>
    </location>
</feature>
<evidence type="ECO:0000250" key="1">
    <source>
        <dbReference type="UniProtKB" id="Q9LZF1"/>
    </source>
</evidence>
<evidence type="ECO:0000250" key="2">
    <source>
        <dbReference type="UniProtKB" id="Q9SZN7"/>
    </source>
</evidence>
<evidence type="ECO:0000255" key="3">
    <source>
        <dbReference type="PROSITE-ProRule" id="PRU00280"/>
    </source>
</evidence>
<evidence type="ECO:0000256" key="4">
    <source>
        <dbReference type="SAM" id="MobiDB-lite"/>
    </source>
</evidence>
<evidence type="ECO:0000303" key="5">
    <source>
    </source>
</evidence>
<evidence type="ECO:0000303" key="6">
    <source>
    </source>
</evidence>
<evidence type="ECO:0000305" key="7"/>
<evidence type="ECO:0000312" key="8">
    <source>
        <dbReference type="Araport" id="AT3G05220"/>
    </source>
</evidence>
<evidence type="ECO:0000312" key="9">
    <source>
        <dbReference type="EMBL" id="AAF27028.1"/>
    </source>
</evidence>
<evidence type="ECO:0000312" key="10">
    <source>
        <dbReference type="EMBL" id="BAE99011.1"/>
    </source>
</evidence>